<keyword id="KW-0010">Activator</keyword>
<keyword id="KW-0025">Alternative splicing</keyword>
<keyword id="KW-0238">DNA-binding</keyword>
<keyword id="KW-1048">Host nucleus</keyword>
<keyword id="KW-1185">Reference proteome</keyword>
<keyword id="KW-0804">Transcription</keyword>
<keyword id="KW-0805">Transcription regulation</keyword>
<reference key="1">
    <citation type="submission" date="1995-02" db="EMBL/GenBank/DDBJ databases">
        <authorList>
            <person name="Fluegel R.M."/>
        </authorList>
    </citation>
    <scope>NUCLEOTIDE SEQUENCE [GENOMIC RNA]</scope>
</reference>
<reference key="2">
    <citation type="journal article" date="1987" name="EMBO J.">
        <title>Nucleotide sequence analysis of the env gene and its flanking regions of the human spumaretrovirus reveals two novel genes.</title>
        <authorList>
            <person name="Fluegel R.M."/>
            <person name="Rethwilm A."/>
            <person name="Maurer B."/>
            <person name="Darai G."/>
        </authorList>
    </citation>
    <scope>NUCLEOTIDE SEQUENCE [GENOMIC DNA] OF 1-149 AND 152-300</scope>
</reference>
<reference key="3">
    <citation type="journal article" date="1991" name="J. Virol.">
        <title>Analysis of splicing patterns of human spumaretrovirus by polymerase chain reaction reveals complex RNA structures.</title>
        <authorList>
            <person name="Muranyi W."/>
            <person name="Fluegel R.M."/>
        </authorList>
    </citation>
    <scope>ALTERNATIVE SPLICING</scope>
</reference>
<reference key="4">
    <citation type="journal article" date="1993" name="J. Virol.">
        <title>Functional organization of the Bel-1 trans activator of human foamy virus.</title>
        <authorList>
            <person name="He F."/>
            <person name="Sun J.D."/>
            <person name="Garrett E.D."/>
            <person name="Cullen B.R."/>
        </authorList>
    </citation>
    <scope>SUBCELLULAR LOCATION</scope>
    <scope>MUTAGENESIS OF 4-TYR-GLU-5; 24-GLU-LEU-25; 47-ARG--PRO-49; 93-CYS--ARG-95; 119-TRP-GLU-120; 145-PRO-MET-146; 169-SER-ALA-170; 191-SER--GLY-193; 197-ARG--ARG-199; 219-ARG--ARG-221; 247-ASN-PRO-248; 266-LEU-PRO-267; 273-MET-GLY-275; 281-GLU-VAL-282 AND 296-GLU-HIS-297</scope>
</reference>
<reference key="5">
    <citation type="journal article" date="1993" name="Proc. Natl. Acad. Sci. U.S.A.">
        <title>Human foamy virus genome possesses an internal, Bel-1-dependent and functional promoter.</title>
        <authorList>
            <person name="Loechelt M."/>
            <person name="Muranyi W."/>
            <person name="Fluegel R.M."/>
        </authorList>
    </citation>
    <scope>FUNCTION</scope>
</reference>
<reference key="6">
    <citation type="journal article" date="1998" name="J. Virol.">
        <title>Identification and functional characterization of a high-affinity Bel-1 DNA binding site located in the human foamy virus internal promoter.</title>
        <authorList>
            <person name="Kang Y."/>
            <person name="Blair W.S."/>
            <person name="Cullen B.R."/>
        </authorList>
    </citation>
    <scope>FUNCTION</scope>
</reference>
<reference key="7">
    <citation type="journal article" date="2003" name="J. Biol. Chem.">
        <title>Bel1-mediated transactivation of the spumaretroviral internal promoter is repressed by nuclear factor I.</title>
        <authorList>
            <person name="Kido K."/>
            <person name="Bannert H."/>
            <person name="Gronostajski R.M."/>
            <person name="Fluegel R.M."/>
        </authorList>
    </citation>
    <scope>FUNCTION</scope>
    <scope>INTERACTION WITH MOUSE NFIA; NFIB; NFIC AND HUMAN NFIX</scope>
</reference>
<reference key="8">
    <citation type="journal article" date="2004" name="Curr. Opin. Microbiol.">
        <title>Foamy viruses-a world apart.</title>
        <authorList>
            <person name="Delelis O."/>
            <person name="Lehmann-Che J."/>
            <person name="Saib A."/>
        </authorList>
    </citation>
    <scope>REVIEW</scope>
</reference>
<protein>
    <recommendedName>
        <fullName>Protein Bel-1</fullName>
    </recommendedName>
    <alternativeName>
        <fullName>Transactivator of spumavirus</fullName>
        <shortName>Tas</shortName>
    </alternativeName>
    <alternativeName>
        <fullName>Transcriptional transactivator</fullName>
    </alternativeName>
</protein>
<feature type="chain" id="PRO_0000125509" description="Protein Bel-1">
    <location>
        <begin position="1"/>
        <end position="300"/>
    </location>
</feature>
<feature type="DNA-binding region" evidence="1">
    <location>
        <begin position="89"/>
        <end position="200"/>
    </location>
</feature>
<feature type="region of interest" description="Disordered" evidence="2">
    <location>
        <begin position="1"/>
        <end position="50"/>
    </location>
</feature>
<feature type="region of interest" description="Disordered" evidence="2">
    <location>
        <begin position="209"/>
        <end position="244"/>
    </location>
</feature>
<feature type="region of interest" description="Transactivation domain" evidence="1">
    <location>
        <begin position="224"/>
        <end position="300"/>
    </location>
</feature>
<feature type="short sequence motif" description="Nuclear localization signal" evidence="7">
    <location>
        <begin position="214"/>
        <end position="223"/>
    </location>
</feature>
<feature type="compositionally biased region" description="Polar residues" evidence="2">
    <location>
        <begin position="10"/>
        <end position="23"/>
    </location>
</feature>
<feature type="compositionally biased region" description="Basic residues" evidence="2">
    <location>
        <begin position="211"/>
        <end position="222"/>
    </location>
</feature>
<feature type="compositionally biased region" description="Polar residues" evidence="2">
    <location>
        <begin position="227"/>
        <end position="237"/>
    </location>
</feature>
<feature type="mutagenesis site" description="No loss of activity, nuclear." evidence="4">
    <original>YE</original>
    <variation>RS</variation>
    <location>
        <begin position="4"/>
        <end position="5"/>
    </location>
</feature>
<feature type="mutagenesis site" description="No loss of activity." evidence="4">
    <original>EL</original>
    <variation>RS</variation>
    <location>
        <begin position="24"/>
        <end position="25"/>
    </location>
</feature>
<feature type="mutagenesis site" description="No loss of activity." evidence="4">
    <original>RRP</original>
    <variation>QIS</variation>
    <location>
        <begin position="47"/>
        <end position="49"/>
    </location>
</feature>
<feature type="mutagenesis site" description="Complete loss of activity, predominantly nuclear." evidence="4">
    <original>CKR</original>
    <variation>LDL</variation>
    <location>
        <begin position="93"/>
        <end position="95"/>
    </location>
</feature>
<feature type="mutagenesis site" description="Complete loss of activity, predominantly nuclear." evidence="4">
    <original>WE</original>
    <variation>RS</variation>
    <location>
        <begin position="119"/>
        <end position="120"/>
    </location>
</feature>
<feature type="mutagenesis site" description="Complete loss of activity, nuclear." evidence="4">
    <original>PM</original>
    <variation>RS</variation>
    <location>
        <begin position="145"/>
        <end position="146"/>
    </location>
</feature>
<feature type="mutagenesis site" description="Complete loss of activity, nuclear." evidence="4">
    <original>SA</original>
    <variation>DL</variation>
    <location>
        <begin position="169"/>
        <end position="170"/>
    </location>
</feature>
<feature type="mutagenesis site" description="No loss of activity, nuclear." evidence="4">
    <original>SEG</original>
    <variation>LRS</variation>
    <location>
        <begin position="191"/>
        <end position="193"/>
    </location>
</feature>
<feature type="mutagenesis site" description="Complete loss of activity, nuclear." evidence="4">
    <original>RPR</original>
    <variation>DLG</variation>
    <location>
        <begin position="197"/>
        <end position="199"/>
    </location>
</feature>
<feature type="mutagenesis site" description="Partial loss of activity, diffuse subcellular location." evidence="4">
    <original>RPR</original>
    <variation>QIW</variation>
    <location>
        <begin position="219"/>
        <end position="221"/>
    </location>
</feature>
<feature type="mutagenesis site" description="No loss of activity." evidence="4">
    <original>NP</original>
    <variation>RS</variation>
    <location>
        <begin position="247"/>
        <end position="248"/>
    </location>
</feature>
<feature type="mutagenesis site" description="No loss of activity." evidence="4">
    <original>LP</original>
    <variation>RS</variation>
    <location>
        <begin position="266"/>
        <end position="267"/>
    </location>
</feature>
<feature type="mutagenesis site" description="No loss of activity." evidence="4">
    <original>MSG</original>
    <variation>KIC</variation>
    <location>
        <begin position="273"/>
        <end position="275"/>
    </location>
</feature>
<feature type="mutagenesis site" description="No loss of activity." evidence="4">
    <original>EV</original>
    <variation>RS</variation>
    <location>
        <begin position="281"/>
        <end position="282"/>
    </location>
</feature>
<feature type="mutagenesis site" description="No loss of activity." evidence="4">
    <original>EH</original>
    <variation>RS</variation>
    <location>
        <begin position="296"/>
        <end position="297"/>
    </location>
</feature>
<feature type="sequence conflict" description="In Ref. 2." evidence="7" ref="2">
    <original>A</original>
    <variation>V</variation>
    <location>
        <position position="238"/>
    </location>
</feature>
<proteinExistence type="evidence at protein level"/>
<comment type="function">
    <text evidence="3 5 6">Transcriptional transactivator that activates the viral internal promoter (IP), thereby enhancing its own expression. This transactivation is repressed by nuclear factor I. Also transactivates the long terminal repeat (LTR) promoter, thereby inducing structural gene expression, initiating the late phase of infection. It is therefore a key regulator of viral gene expression. It directly binds to and activates DNA target sites of viral promoters and those of distinct cellular genes. Required for viral replication.</text>
</comment>
<comment type="subunit">
    <text>Homodimer or homomultimer. Forms complexes with the host nuclear factors NFIA, NFIB, NFIC or NFIX.</text>
</comment>
<comment type="subcellular location">
    <subcellularLocation>
        <location evidence="4">Host nucleus</location>
    </subcellularLocation>
</comment>
<comment type="alternative products">
    <event type="alternative splicing"/>
    <isoform>
        <id>P14353-1</id>
        <name>Bel-1</name>
        <name>Bel1</name>
        <sequence type="displayed"/>
    </isoform>
    <isoform>
        <id>P89873-1</id>
        <name>Bet</name>
        <sequence type="external"/>
    </isoform>
    <isoform>
        <id>P89873-2</id>
        <name>Bel-2</name>
        <name>Bel2</name>
        <sequence type="external"/>
    </isoform>
    <text>The first 88 residues are shared by isoform Bet and isoform Bel-1, the last 396 residues are shared by isoform Bet and isoform Bel-2.</text>
</comment>
<evidence type="ECO:0000255" key="1"/>
<evidence type="ECO:0000256" key="2">
    <source>
        <dbReference type="SAM" id="MobiDB-lite"/>
    </source>
</evidence>
<evidence type="ECO:0000269" key="3">
    <source>
    </source>
</evidence>
<evidence type="ECO:0000269" key="4">
    <source>
    </source>
</evidence>
<evidence type="ECO:0000269" key="5">
    <source>
    </source>
</evidence>
<evidence type="ECO:0000269" key="6">
    <source>
    </source>
</evidence>
<evidence type="ECO:0000305" key="7"/>
<accession>P14353</accession>
<accession>P89872</accession>
<gene>
    <name type="primary">bel1</name>
    <name type="synonym">Taf</name>
    <name type="synonym">tas</name>
</gene>
<sequence>MDSYEKEESVASTSGIQDLQTLSELVGPENAGEGELTIAEEPEENPRRPRRYTKREVKCVSYHAYKEIEDKHPQHIKLQDWIPTPEEMSKSLCKRLILCGLYSAEKASEILRMPFTVSWEQSDTDPDCFIVSYTCIFCDAVIHDPMPIRWDPEVGIWVKYKPLRGIVGSAVFIMHKHQRNCSLVKPSTSCSEGPKPRPRHDPVLRCDMFEKHHKPRQKRPRRRSIDNESCASSSDTMANEPGSLCTNPLWNPGPLLSGLLEESSNLPNLEVHMSGGPFWEEVYGDSILGPPSGSGEHSVL</sequence>
<name>BEL1_FOAMV</name>
<organism>
    <name type="scientific">Human spumaretrovirus</name>
    <name type="common">SFVcpz(hu)</name>
    <name type="synonym">Human foamy virus</name>
    <dbReference type="NCBI Taxonomy" id="11963"/>
    <lineage>
        <taxon>Viruses</taxon>
        <taxon>Riboviria</taxon>
        <taxon>Pararnavirae</taxon>
        <taxon>Artverviricota</taxon>
        <taxon>Revtraviricetes</taxon>
        <taxon>Ortervirales</taxon>
        <taxon>Retroviridae</taxon>
        <taxon>Spumaretrovirinae</taxon>
        <taxon>Spumavirus</taxon>
        <taxon>Simian foamy virus</taxon>
    </lineage>
</organism>
<dbReference type="EMBL" id="U21247">
    <property type="protein sequence ID" value="AAB48115.1"/>
    <property type="molecule type" value="Genomic_RNA"/>
</dbReference>
<dbReference type="EMBL" id="X05591">
    <property type="status" value="NOT_ANNOTATED_CDS"/>
    <property type="molecule type" value="Genomic_DNA"/>
</dbReference>
<dbReference type="EMBL" id="X05592">
    <property type="status" value="NOT_ANNOTATED_CDS"/>
    <property type="molecule type" value="Genomic_DNA"/>
</dbReference>
<dbReference type="Proteomes" id="UP000138352">
    <property type="component" value="Genome"/>
</dbReference>
<dbReference type="GO" id="GO:0042025">
    <property type="term" value="C:host cell nucleus"/>
    <property type="evidence" value="ECO:0007669"/>
    <property type="project" value="UniProtKB-SubCell"/>
</dbReference>
<dbReference type="GO" id="GO:0003677">
    <property type="term" value="F:DNA binding"/>
    <property type="evidence" value="ECO:0007669"/>
    <property type="project" value="UniProtKB-KW"/>
</dbReference>
<dbReference type="GO" id="GO:0045893">
    <property type="term" value="P:positive regulation of DNA-templated transcription"/>
    <property type="evidence" value="ECO:0007669"/>
    <property type="project" value="InterPro"/>
</dbReference>
<dbReference type="GO" id="GO:0016032">
    <property type="term" value="P:viral process"/>
    <property type="evidence" value="ECO:0007669"/>
    <property type="project" value="InterPro"/>
</dbReference>
<dbReference type="InterPro" id="IPR004956">
    <property type="entry name" value="Foamy_BEL"/>
</dbReference>
<dbReference type="Pfam" id="PF03274">
    <property type="entry name" value="Foamy_BEL"/>
    <property type="match status" value="2"/>
</dbReference>
<organismHost>
    <name type="scientific">Homo sapiens</name>
    <name type="common">Human</name>
    <dbReference type="NCBI Taxonomy" id="9606"/>
</organismHost>